<dbReference type="EMBL" id="CU928162">
    <property type="protein sequence ID" value="CAR07399.1"/>
    <property type="molecule type" value="Genomic_DNA"/>
</dbReference>
<dbReference type="RefSeq" id="WP_000074151.1">
    <property type="nucleotide sequence ID" value="NC_011745.1"/>
</dbReference>
<dbReference type="SMR" id="B7MTI5"/>
<dbReference type="KEGG" id="ecq:ECED1_1198"/>
<dbReference type="HOGENOM" id="CLU_001265_57_3_6"/>
<dbReference type="Proteomes" id="UP000000748">
    <property type="component" value="Chromosome"/>
</dbReference>
<dbReference type="GO" id="GO:0005886">
    <property type="term" value="C:plasma membrane"/>
    <property type="evidence" value="ECO:0007669"/>
    <property type="project" value="UniProtKB-SubCell"/>
</dbReference>
<dbReference type="GO" id="GO:0022857">
    <property type="term" value="F:transmembrane transporter activity"/>
    <property type="evidence" value="ECO:0007669"/>
    <property type="project" value="UniProtKB-UniRule"/>
</dbReference>
<dbReference type="GO" id="GO:0046677">
    <property type="term" value="P:response to antibiotic"/>
    <property type="evidence" value="ECO:0007669"/>
    <property type="project" value="UniProtKB-KW"/>
</dbReference>
<dbReference type="CDD" id="cd17391">
    <property type="entry name" value="MFS_MdtG_MDR_like"/>
    <property type="match status" value="1"/>
</dbReference>
<dbReference type="FunFam" id="1.20.1250.20:FF:000020">
    <property type="entry name" value="Multidrug resistance protein MdtG"/>
    <property type="match status" value="1"/>
</dbReference>
<dbReference type="FunFam" id="1.20.1250.20:FF:000022">
    <property type="entry name" value="Multidrug resistance protein MdtG"/>
    <property type="match status" value="1"/>
</dbReference>
<dbReference type="Gene3D" id="1.20.1250.20">
    <property type="entry name" value="MFS general substrate transporter like domains"/>
    <property type="match status" value="2"/>
</dbReference>
<dbReference type="HAMAP" id="MF_01528">
    <property type="entry name" value="MFS_MdtG"/>
    <property type="match status" value="1"/>
</dbReference>
<dbReference type="InterPro" id="IPR011701">
    <property type="entry name" value="MFS"/>
</dbReference>
<dbReference type="InterPro" id="IPR020846">
    <property type="entry name" value="MFS_dom"/>
</dbReference>
<dbReference type="InterPro" id="IPR050497">
    <property type="entry name" value="MFS_MdtG_subfamily"/>
</dbReference>
<dbReference type="InterPro" id="IPR036259">
    <property type="entry name" value="MFS_trans_sf"/>
</dbReference>
<dbReference type="InterPro" id="IPR023692">
    <property type="entry name" value="Mutidrug-R_MdtG"/>
</dbReference>
<dbReference type="InterPro" id="IPR001958">
    <property type="entry name" value="Tet-R_TetA/multi-R_MdtG-like"/>
</dbReference>
<dbReference type="NCBIfam" id="NF007372">
    <property type="entry name" value="PRK09874.1"/>
    <property type="match status" value="1"/>
</dbReference>
<dbReference type="PANTHER" id="PTHR43414">
    <property type="entry name" value="MULTIDRUG RESISTANCE PROTEIN MDTG"/>
    <property type="match status" value="1"/>
</dbReference>
<dbReference type="PANTHER" id="PTHR43414:SF6">
    <property type="entry name" value="MULTIDRUG RESISTANCE PROTEIN MDTG"/>
    <property type="match status" value="1"/>
</dbReference>
<dbReference type="Pfam" id="PF07690">
    <property type="entry name" value="MFS_1"/>
    <property type="match status" value="1"/>
</dbReference>
<dbReference type="PRINTS" id="PR01035">
    <property type="entry name" value="TCRTETA"/>
</dbReference>
<dbReference type="SUPFAM" id="SSF103473">
    <property type="entry name" value="MFS general substrate transporter"/>
    <property type="match status" value="1"/>
</dbReference>
<dbReference type="PROSITE" id="PS50850">
    <property type="entry name" value="MFS"/>
    <property type="match status" value="1"/>
</dbReference>
<protein>
    <recommendedName>
        <fullName evidence="1">Multidrug resistance protein MdtG</fullName>
    </recommendedName>
</protein>
<proteinExistence type="inferred from homology"/>
<gene>
    <name evidence="1" type="primary">mdtG</name>
    <name type="ordered locus">ECED1_1198</name>
</gene>
<comment type="function">
    <text evidence="1">Confers resistance to fosfomycin and deoxycholate.</text>
</comment>
<comment type="subcellular location">
    <subcellularLocation>
        <location evidence="1">Cell inner membrane</location>
        <topology evidence="1">Multi-pass membrane protein</topology>
    </subcellularLocation>
</comment>
<comment type="similarity">
    <text evidence="1">Belongs to the major facilitator superfamily. DHA1 family. MdtG (TC 2.A.1.2.20) subfamily.</text>
</comment>
<accession>B7MTI5</accession>
<evidence type="ECO:0000255" key="1">
    <source>
        <dbReference type="HAMAP-Rule" id="MF_01528"/>
    </source>
</evidence>
<feature type="chain" id="PRO_1000185161" description="Multidrug resistance protein MdtG">
    <location>
        <begin position="1"/>
        <end position="408"/>
    </location>
</feature>
<feature type="transmembrane region" description="Helical" evidence="1">
    <location>
        <begin position="16"/>
        <end position="36"/>
    </location>
</feature>
<feature type="transmembrane region" description="Helical" evidence="1">
    <location>
        <begin position="58"/>
        <end position="78"/>
    </location>
</feature>
<feature type="transmembrane region" description="Helical" evidence="1">
    <location>
        <begin position="92"/>
        <end position="112"/>
    </location>
</feature>
<feature type="transmembrane region" description="Helical" evidence="1">
    <location>
        <begin position="115"/>
        <end position="135"/>
    </location>
</feature>
<feature type="transmembrane region" description="Helical" evidence="1">
    <location>
        <begin position="146"/>
        <end position="166"/>
    </location>
</feature>
<feature type="transmembrane region" description="Helical" evidence="1">
    <location>
        <begin position="173"/>
        <end position="193"/>
    </location>
</feature>
<feature type="transmembrane region" description="Helical" evidence="1">
    <location>
        <begin position="224"/>
        <end position="244"/>
    </location>
</feature>
<feature type="transmembrane region" description="Helical" evidence="1">
    <location>
        <begin position="256"/>
        <end position="276"/>
    </location>
</feature>
<feature type="transmembrane region" description="Helical" evidence="1">
    <location>
        <begin position="290"/>
        <end position="310"/>
    </location>
</feature>
<feature type="transmembrane region" description="Helical" evidence="1">
    <location>
        <begin position="319"/>
        <end position="339"/>
    </location>
</feature>
<feature type="transmembrane region" description="Helical" evidence="1">
    <location>
        <begin position="378"/>
        <end position="398"/>
    </location>
</feature>
<sequence length="408" mass="43877">MSPCENDPPINWKRNLIVAWLGCFLTGAAFSLVMPFLPLYVEQLGVTGHSALNMWSGIVFSITFLFSAIASPFWGGLADRKGRKLMLLRSALGMGIVMVLMGLAQNIWQFLILRALLGLLGGFVPNANALIATQVPRNKSGWALGTLSTGGVSGALLGPMAGGLLADSYGLRPVFFITASVLILCFFVTLFCIREKFQPVSKKEMLHMREVVTSLKNPKLVLSLFVTTLIIQVATGSIAPILTLYVRELAGNVSNVAFISGMIASVPGVAALLSAPRLGKLGDRIGPEKILITALIFSVLLLIPMSYVQTPLQLGILRFLLGAADGALLPAVQTLLVYNSSNQIAGRIFSYNQSFRDIGNVTGPLMGAAISANYGFRAVFLVTAGVVLFNAVYSWNSLRRRRIPQISN</sequence>
<keyword id="KW-0046">Antibiotic resistance</keyword>
<keyword id="KW-0997">Cell inner membrane</keyword>
<keyword id="KW-1003">Cell membrane</keyword>
<keyword id="KW-0472">Membrane</keyword>
<keyword id="KW-0812">Transmembrane</keyword>
<keyword id="KW-1133">Transmembrane helix</keyword>
<keyword id="KW-0813">Transport</keyword>
<organism>
    <name type="scientific">Escherichia coli O81 (strain ED1a)</name>
    <dbReference type="NCBI Taxonomy" id="585397"/>
    <lineage>
        <taxon>Bacteria</taxon>
        <taxon>Pseudomonadati</taxon>
        <taxon>Pseudomonadota</taxon>
        <taxon>Gammaproteobacteria</taxon>
        <taxon>Enterobacterales</taxon>
        <taxon>Enterobacteriaceae</taxon>
        <taxon>Escherichia</taxon>
    </lineage>
</organism>
<name>MDTG_ECO81</name>
<reference key="1">
    <citation type="journal article" date="2009" name="PLoS Genet.">
        <title>Organised genome dynamics in the Escherichia coli species results in highly diverse adaptive paths.</title>
        <authorList>
            <person name="Touchon M."/>
            <person name="Hoede C."/>
            <person name="Tenaillon O."/>
            <person name="Barbe V."/>
            <person name="Baeriswyl S."/>
            <person name="Bidet P."/>
            <person name="Bingen E."/>
            <person name="Bonacorsi S."/>
            <person name="Bouchier C."/>
            <person name="Bouvet O."/>
            <person name="Calteau A."/>
            <person name="Chiapello H."/>
            <person name="Clermont O."/>
            <person name="Cruveiller S."/>
            <person name="Danchin A."/>
            <person name="Diard M."/>
            <person name="Dossat C."/>
            <person name="Karoui M.E."/>
            <person name="Frapy E."/>
            <person name="Garry L."/>
            <person name="Ghigo J.M."/>
            <person name="Gilles A.M."/>
            <person name="Johnson J."/>
            <person name="Le Bouguenec C."/>
            <person name="Lescat M."/>
            <person name="Mangenot S."/>
            <person name="Martinez-Jehanne V."/>
            <person name="Matic I."/>
            <person name="Nassif X."/>
            <person name="Oztas S."/>
            <person name="Petit M.A."/>
            <person name="Pichon C."/>
            <person name="Rouy Z."/>
            <person name="Ruf C.S."/>
            <person name="Schneider D."/>
            <person name="Tourret J."/>
            <person name="Vacherie B."/>
            <person name="Vallenet D."/>
            <person name="Medigue C."/>
            <person name="Rocha E.P.C."/>
            <person name="Denamur E."/>
        </authorList>
    </citation>
    <scope>NUCLEOTIDE SEQUENCE [LARGE SCALE GENOMIC DNA]</scope>
    <source>
        <strain>ED1a</strain>
    </source>
</reference>